<reference key="1">
    <citation type="journal article" date="1997" name="Microbiology">
        <title>Sequence completion, identification and definition of the fengycin operon in Bacillus subtilis 168.</title>
        <authorList>
            <person name="Tosato V."/>
            <person name="Albertini A.M."/>
            <person name="Zotti M."/>
            <person name="Sonda S."/>
            <person name="Bruschi C.V."/>
        </authorList>
    </citation>
    <scope>NUCLEOTIDE SEQUENCE [GENOMIC DNA]</scope>
    <source>
        <strain>168</strain>
    </source>
</reference>
<reference key="2">
    <citation type="journal article" date="1999" name="Proc. Natl. Acad. Sci. U.S.A.">
        <title>The mycosubtilin synthetase of Bacillus subtilis ATCC6633: a multifunctional hybrid between a peptide synthetase, an amino transferase, and a fatty acid synthase.</title>
        <authorList>
            <person name="Duitman E.H."/>
            <person name="Hamoen L.W."/>
            <person name="Rembold M."/>
            <person name="Venema G."/>
            <person name="Seitz H."/>
            <person name="Saenger W."/>
            <person name="Bernhard F."/>
            <person name="Reinhardt R."/>
            <person name="Schmidt M."/>
            <person name="Ullrich C."/>
            <person name="Stein T."/>
            <person name="Leenders F."/>
            <person name="Vater J."/>
        </authorList>
    </citation>
    <scope>NUCLEOTIDE SEQUENCE [GENOMIC DNA]</scope>
    <source>
        <strain>ATCC 6633 / PCI 219 / NRS 231</strain>
    </source>
</reference>
<reference key="3">
    <citation type="journal article" date="1997" name="Nature">
        <title>The complete genome sequence of the Gram-positive bacterium Bacillus subtilis.</title>
        <authorList>
            <person name="Kunst F."/>
            <person name="Ogasawara N."/>
            <person name="Moszer I."/>
            <person name="Albertini A.M."/>
            <person name="Alloni G."/>
            <person name="Azevedo V."/>
            <person name="Bertero M.G."/>
            <person name="Bessieres P."/>
            <person name="Bolotin A."/>
            <person name="Borchert S."/>
            <person name="Borriss R."/>
            <person name="Boursier L."/>
            <person name="Brans A."/>
            <person name="Braun M."/>
            <person name="Brignell S.C."/>
            <person name="Bron S."/>
            <person name="Brouillet S."/>
            <person name="Bruschi C.V."/>
            <person name="Caldwell B."/>
            <person name="Capuano V."/>
            <person name="Carter N.M."/>
            <person name="Choi S.-K."/>
            <person name="Codani J.-J."/>
            <person name="Connerton I.F."/>
            <person name="Cummings N.J."/>
            <person name="Daniel R.A."/>
            <person name="Denizot F."/>
            <person name="Devine K.M."/>
            <person name="Duesterhoeft A."/>
            <person name="Ehrlich S.D."/>
            <person name="Emmerson P.T."/>
            <person name="Entian K.-D."/>
            <person name="Errington J."/>
            <person name="Fabret C."/>
            <person name="Ferrari E."/>
            <person name="Foulger D."/>
            <person name="Fritz C."/>
            <person name="Fujita M."/>
            <person name="Fujita Y."/>
            <person name="Fuma S."/>
            <person name="Galizzi A."/>
            <person name="Galleron N."/>
            <person name="Ghim S.-Y."/>
            <person name="Glaser P."/>
            <person name="Goffeau A."/>
            <person name="Golightly E.J."/>
            <person name="Grandi G."/>
            <person name="Guiseppi G."/>
            <person name="Guy B.J."/>
            <person name="Haga K."/>
            <person name="Haiech J."/>
            <person name="Harwood C.R."/>
            <person name="Henaut A."/>
            <person name="Hilbert H."/>
            <person name="Holsappel S."/>
            <person name="Hosono S."/>
            <person name="Hullo M.-F."/>
            <person name="Itaya M."/>
            <person name="Jones L.-M."/>
            <person name="Joris B."/>
            <person name="Karamata D."/>
            <person name="Kasahara Y."/>
            <person name="Klaerr-Blanchard M."/>
            <person name="Klein C."/>
            <person name="Kobayashi Y."/>
            <person name="Koetter P."/>
            <person name="Koningstein G."/>
            <person name="Krogh S."/>
            <person name="Kumano M."/>
            <person name="Kurita K."/>
            <person name="Lapidus A."/>
            <person name="Lardinois S."/>
            <person name="Lauber J."/>
            <person name="Lazarevic V."/>
            <person name="Lee S.-M."/>
            <person name="Levine A."/>
            <person name="Liu H."/>
            <person name="Masuda S."/>
            <person name="Mauel C."/>
            <person name="Medigue C."/>
            <person name="Medina N."/>
            <person name="Mellado R.P."/>
            <person name="Mizuno M."/>
            <person name="Moestl D."/>
            <person name="Nakai S."/>
            <person name="Noback M."/>
            <person name="Noone D."/>
            <person name="O'Reilly M."/>
            <person name="Ogawa K."/>
            <person name="Ogiwara A."/>
            <person name="Oudega B."/>
            <person name="Park S.-H."/>
            <person name="Parro V."/>
            <person name="Pohl T.M."/>
            <person name="Portetelle D."/>
            <person name="Porwollik S."/>
            <person name="Prescott A.M."/>
            <person name="Presecan E."/>
            <person name="Pujic P."/>
            <person name="Purnelle B."/>
            <person name="Rapoport G."/>
            <person name="Rey M."/>
            <person name="Reynolds S."/>
            <person name="Rieger M."/>
            <person name="Rivolta C."/>
            <person name="Rocha E."/>
            <person name="Roche B."/>
            <person name="Rose M."/>
            <person name="Sadaie Y."/>
            <person name="Sato T."/>
            <person name="Scanlan E."/>
            <person name="Schleich S."/>
            <person name="Schroeter R."/>
            <person name="Scoffone F."/>
            <person name="Sekiguchi J."/>
            <person name="Sekowska A."/>
            <person name="Seror S.J."/>
            <person name="Serror P."/>
            <person name="Shin B.-S."/>
            <person name="Soldo B."/>
            <person name="Sorokin A."/>
            <person name="Tacconi E."/>
            <person name="Takagi T."/>
            <person name="Takahashi H."/>
            <person name="Takemaru K."/>
            <person name="Takeuchi M."/>
            <person name="Tamakoshi A."/>
            <person name="Tanaka T."/>
            <person name="Terpstra P."/>
            <person name="Tognoni A."/>
            <person name="Tosato V."/>
            <person name="Uchiyama S."/>
            <person name="Vandenbol M."/>
            <person name="Vannier F."/>
            <person name="Vassarotti A."/>
            <person name="Viari A."/>
            <person name="Wambutt R."/>
            <person name="Wedler E."/>
            <person name="Wedler H."/>
            <person name="Weitzenegger T."/>
            <person name="Winters P."/>
            <person name="Wipat A."/>
            <person name="Yamamoto H."/>
            <person name="Yamane K."/>
            <person name="Yasumoto K."/>
            <person name="Yata K."/>
            <person name="Yoshida K."/>
            <person name="Yoshikawa H.-F."/>
            <person name="Zumstein E."/>
            <person name="Yoshikawa H."/>
            <person name="Danchin A."/>
        </authorList>
    </citation>
    <scope>NUCLEOTIDE SEQUENCE [LARGE SCALE GENOMIC DNA]</scope>
    <source>
        <strain>168</strain>
    </source>
</reference>
<feature type="chain" id="PRO_0000049643" description="UPF0713 protein YngL">
    <location>
        <begin position="1"/>
        <end position="130"/>
    </location>
</feature>
<feature type="transmembrane region" description="Helical" evidence="1">
    <location>
        <begin position="4"/>
        <end position="25"/>
    </location>
</feature>
<feature type="transmembrane region" description="Helical" evidence="1">
    <location>
        <begin position="62"/>
        <end position="84"/>
    </location>
</feature>
<feature type="transmembrane region" description="Helical" evidence="1">
    <location>
        <begin position="89"/>
        <end position="111"/>
    </location>
</feature>
<feature type="sequence variant" description="In strain: ATCC 6633.">
    <original>F</original>
    <variation>L</variation>
    <location>
        <position position="6"/>
    </location>
</feature>
<feature type="sequence variant" description="In strain: ATCC 6633.">
    <original>I</original>
    <variation>V</variation>
    <location>
        <position position="89"/>
    </location>
</feature>
<feature type="sequence variant" description="In strain: ATCC 6633.">
    <original>L</original>
    <variation>V</variation>
    <location>
        <position position="91"/>
    </location>
</feature>
<feature type="sequence variant" description="In strain: ATCC 6633.">
    <original>M</original>
    <variation>I</variation>
    <location>
        <position position="125"/>
    </location>
</feature>
<comment type="subcellular location">
    <subcellularLocation>
        <location evidence="2">Cell membrane</location>
        <topology evidence="2">Multi-pass membrane protein</topology>
    </subcellularLocation>
</comment>
<comment type="similarity">
    <text evidence="2">Belongs to the UPF0713 family.</text>
</comment>
<protein>
    <recommendedName>
        <fullName>UPF0713 protein YngL</fullName>
    </recommendedName>
</protein>
<accession>O34506</accession>
<accession>Q9R9I8</accession>
<organism>
    <name type="scientific">Bacillus subtilis (strain 168)</name>
    <dbReference type="NCBI Taxonomy" id="224308"/>
    <lineage>
        <taxon>Bacteria</taxon>
        <taxon>Bacillati</taxon>
        <taxon>Bacillota</taxon>
        <taxon>Bacilli</taxon>
        <taxon>Bacillales</taxon>
        <taxon>Bacillaceae</taxon>
        <taxon>Bacillus</taxon>
    </lineage>
</organism>
<gene>
    <name type="primary">yngL</name>
    <name type="ordered locus">BSU18290</name>
</gene>
<sequence length="130" mass="14670">MDRLSFLTFIMLILASYRLTHLIVFDKITEFIRKPFMKKKRIVDQNGHVDEKSVPASNFGYMLNCYWCAGVWCAILIGLGYLFLPRIAIPLIFILAIAGAQAILETAVGVGVKLIDVLKSLQTMMNDKKS</sequence>
<keyword id="KW-1003">Cell membrane</keyword>
<keyword id="KW-0472">Membrane</keyword>
<keyword id="KW-1185">Reference proteome</keyword>
<keyword id="KW-0812">Transmembrane</keyword>
<keyword id="KW-1133">Transmembrane helix</keyword>
<proteinExistence type="inferred from homology"/>
<name>YNGL_BACSU</name>
<dbReference type="EMBL" id="Y13917">
    <property type="protein sequence ID" value="CAA74214.1"/>
    <property type="molecule type" value="Genomic_DNA"/>
</dbReference>
<dbReference type="EMBL" id="AF184956">
    <property type="protein sequence ID" value="AAF08798.1"/>
    <property type="molecule type" value="Genomic_DNA"/>
</dbReference>
<dbReference type="EMBL" id="AL009126">
    <property type="protein sequence ID" value="CAB13712.1"/>
    <property type="molecule type" value="Genomic_DNA"/>
</dbReference>
<dbReference type="PIR" id="A69894">
    <property type="entry name" value="A69894"/>
</dbReference>
<dbReference type="PIR" id="T44809">
    <property type="entry name" value="T44809"/>
</dbReference>
<dbReference type="RefSeq" id="NP_389711.1">
    <property type="nucleotide sequence ID" value="NC_000964.3"/>
</dbReference>
<dbReference type="RefSeq" id="WP_003231518.1">
    <property type="nucleotide sequence ID" value="NZ_OZ025638.1"/>
</dbReference>
<dbReference type="SMR" id="O34506"/>
<dbReference type="FunCoup" id="O34506">
    <property type="interactions" value="4"/>
</dbReference>
<dbReference type="STRING" id="224308.BSU18290"/>
<dbReference type="PaxDb" id="224308-BSU18290"/>
<dbReference type="EnsemblBacteria" id="CAB13712">
    <property type="protein sequence ID" value="CAB13712"/>
    <property type="gene ID" value="BSU_18290"/>
</dbReference>
<dbReference type="GeneID" id="939955"/>
<dbReference type="KEGG" id="bsu:BSU18290"/>
<dbReference type="PATRIC" id="fig|224308.179.peg.1996"/>
<dbReference type="eggNOG" id="ENOG5032RXN">
    <property type="taxonomic scope" value="Bacteria"/>
</dbReference>
<dbReference type="InParanoid" id="O34506"/>
<dbReference type="OrthoDB" id="4722315at2"/>
<dbReference type="BioCyc" id="BSUB:BSU18290-MONOMER"/>
<dbReference type="Proteomes" id="UP000001570">
    <property type="component" value="Chromosome"/>
</dbReference>
<dbReference type="GO" id="GO:0005886">
    <property type="term" value="C:plasma membrane"/>
    <property type="evidence" value="ECO:0007669"/>
    <property type="project" value="UniProtKB-SubCell"/>
</dbReference>
<dbReference type="InterPro" id="IPR010773">
    <property type="entry name" value="Mycophage_PG1_Gp7"/>
</dbReference>
<dbReference type="Pfam" id="PF07098">
    <property type="entry name" value="DUF1360"/>
    <property type="match status" value="1"/>
</dbReference>
<evidence type="ECO:0000255" key="1"/>
<evidence type="ECO:0000305" key="2"/>